<sequence length="140" mass="14882">MAVIYKTTAHASAGREGVVQTVDGFTVSLAFPKPGATHQDKNNPEQLFASAYAGCFSQAVRVVLQQHQLQLATQPIVGVSVELHDQDGLFHIKAGVELAITGVDQTTAQTVITAAHAMCPFSRLIKPENFLGLTLNGAKL</sequence>
<evidence type="ECO:0000305" key="1"/>
<gene>
    <name type="ordered locus">MPN_668</name>
    <name type="ORF">K05_orf140</name>
    <name type="ORF">MP174</name>
</gene>
<keyword id="KW-1185">Reference proteome</keyword>
<proteinExistence type="inferred from homology"/>
<dbReference type="EMBL" id="U00089">
    <property type="protein sequence ID" value="AAB95822.1"/>
    <property type="molecule type" value="Genomic_DNA"/>
</dbReference>
<dbReference type="PIR" id="S73500">
    <property type="entry name" value="S73500"/>
</dbReference>
<dbReference type="RefSeq" id="NP_110357.1">
    <property type="nucleotide sequence ID" value="NC_000912.1"/>
</dbReference>
<dbReference type="RefSeq" id="WP_010875025.1">
    <property type="nucleotide sequence ID" value="NZ_OU342337.1"/>
</dbReference>
<dbReference type="SMR" id="P75123"/>
<dbReference type="IntAct" id="P75123">
    <property type="interactions" value="4"/>
</dbReference>
<dbReference type="STRING" id="272634.MPN_668"/>
<dbReference type="EnsemblBacteria" id="AAB95822">
    <property type="protein sequence ID" value="AAB95822"/>
    <property type="gene ID" value="MPN_668"/>
</dbReference>
<dbReference type="KEGG" id="mpn:MPN_668"/>
<dbReference type="PATRIC" id="fig|272634.6.peg.733"/>
<dbReference type="HOGENOM" id="CLU_106355_2_1_14"/>
<dbReference type="OrthoDB" id="9797508at2"/>
<dbReference type="BioCyc" id="MPNE272634:G1GJ3-1070-MONOMER"/>
<dbReference type="Proteomes" id="UP000000808">
    <property type="component" value="Chromosome"/>
</dbReference>
<dbReference type="GO" id="GO:0006979">
    <property type="term" value="P:response to oxidative stress"/>
    <property type="evidence" value="ECO:0007669"/>
    <property type="project" value="InterPro"/>
</dbReference>
<dbReference type="Gene3D" id="2.20.25.10">
    <property type="match status" value="1"/>
</dbReference>
<dbReference type="Gene3D" id="3.30.300.20">
    <property type="match status" value="1"/>
</dbReference>
<dbReference type="InterPro" id="IPR015946">
    <property type="entry name" value="KH_dom-like_a/b"/>
</dbReference>
<dbReference type="InterPro" id="IPR019953">
    <property type="entry name" value="OHR"/>
</dbReference>
<dbReference type="InterPro" id="IPR003718">
    <property type="entry name" value="OsmC/Ohr_fam"/>
</dbReference>
<dbReference type="InterPro" id="IPR036102">
    <property type="entry name" value="OsmC/Ohrsf"/>
</dbReference>
<dbReference type="NCBIfam" id="TIGR03561">
    <property type="entry name" value="organ_hyd_perox"/>
    <property type="match status" value="1"/>
</dbReference>
<dbReference type="PANTHER" id="PTHR33797">
    <property type="entry name" value="ORGANIC HYDROPEROXIDE RESISTANCE PROTEIN-LIKE"/>
    <property type="match status" value="1"/>
</dbReference>
<dbReference type="PANTHER" id="PTHR33797:SF2">
    <property type="entry name" value="ORGANIC HYDROPEROXIDE RESISTANCE PROTEIN-LIKE"/>
    <property type="match status" value="1"/>
</dbReference>
<dbReference type="Pfam" id="PF02566">
    <property type="entry name" value="OsmC"/>
    <property type="match status" value="1"/>
</dbReference>
<dbReference type="SUPFAM" id="SSF82784">
    <property type="entry name" value="OsmC-like"/>
    <property type="match status" value="1"/>
</dbReference>
<comment type="similarity">
    <text evidence="1">Belongs to the OsmC/Ohr family.</text>
</comment>
<organism>
    <name type="scientific">Mycoplasma pneumoniae (strain ATCC 29342 / M129 / Subtype 1)</name>
    <name type="common">Mycoplasmoides pneumoniae</name>
    <dbReference type="NCBI Taxonomy" id="272634"/>
    <lineage>
        <taxon>Bacteria</taxon>
        <taxon>Bacillati</taxon>
        <taxon>Mycoplasmatota</taxon>
        <taxon>Mycoplasmoidales</taxon>
        <taxon>Mycoplasmoidaceae</taxon>
        <taxon>Mycoplasmoides</taxon>
    </lineage>
</organism>
<name>OHRL_MYCPN</name>
<accession>P75123</accession>
<feature type="chain" id="PRO_0000172732" description="Organic hydroperoxide resistance protein-like">
    <location>
        <begin position="1"/>
        <end position="140"/>
    </location>
</feature>
<reference key="1">
    <citation type="journal article" date="1996" name="Nucleic Acids Res.">
        <title>Complete sequence analysis of the genome of the bacterium Mycoplasma pneumoniae.</title>
        <authorList>
            <person name="Himmelreich R."/>
            <person name="Hilbert H."/>
            <person name="Plagens H."/>
            <person name="Pirkl E."/>
            <person name="Li B.-C."/>
            <person name="Herrmann R."/>
        </authorList>
    </citation>
    <scope>NUCLEOTIDE SEQUENCE [LARGE SCALE GENOMIC DNA]</scope>
    <source>
        <strain>ATCC 29342 / M129 / Subtype 1</strain>
    </source>
</reference>
<protein>
    <recommendedName>
        <fullName>Organic hydroperoxide resistance protein-like</fullName>
    </recommendedName>
</protein>